<name>MES12_ARATH</name>
<reference key="1">
    <citation type="journal article" date="1999" name="Nature">
        <title>Sequence and analysis of chromosome 4 of the plant Arabidopsis thaliana.</title>
        <authorList>
            <person name="Mayer K.F.X."/>
            <person name="Schueller C."/>
            <person name="Wambutt R."/>
            <person name="Murphy G."/>
            <person name="Volckaert G."/>
            <person name="Pohl T."/>
            <person name="Duesterhoeft A."/>
            <person name="Stiekema W."/>
            <person name="Entian K.-D."/>
            <person name="Terryn N."/>
            <person name="Harris B."/>
            <person name="Ansorge W."/>
            <person name="Brandt P."/>
            <person name="Grivell L.A."/>
            <person name="Rieger M."/>
            <person name="Weichselgartner M."/>
            <person name="de Simone V."/>
            <person name="Obermaier B."/>
            <person name="Mache R."/>
            <person name="Mueller M."/>
            <person name="Kreis M."/>
            <person name="Delseny M."/>
            <person name="Puigdomenech P."/>
            <person name="Watson M."/>
            <person name="Schmidtheini T."/>
            <person name="Reichert B."/>
            <person name="Portetelle D."/>
            <person name="Perez-Alonso M."/>
            <person name="Boutry M."/>
            <person name="Bancroft I."/>
            <person name="Vos P."/>
            <person name="Hoheisel J."/>
            <person name="Zimmermann W."/>
            <person name="Wedler H."/>
            <person name="Ridley P."/>
            <person name="Langham S.-A."/>
            <person name="McCullagh B."/>
            <person name="Bilham L."/>
            <person name="Robben J."/>
            <person name="van der Schueren J."/>
            <person name="Grymonprez B."/>
            <person name="Chuang Y.-J."/>
            <person name="Vandenbussche F."/>
            <person name="Braeken M."/>
            <person name="Weltjens I."/>
            <person name="Voet M."/>
            <person name="Bastiaens I."/>
            <person name="Aert R."/>
            <person name="Defoor E."/>
            <person name="Weitzenegger T."/>
            <person name="Bothe G."/>
            <person name="Ramsperger U."/>
            <person name="Hilbert H."/>
            <person name="Braun M."/>
            <person name="Holzer E."/>
            <person name="Brandt A."/>
            <person name="Peters S."/>
            <person name="van Staveren M."/>
            <person name="Dirkse W."/>
            <person name="Mooijman P."/>
            <person name="Klein Lankhorst R."/>
            <person name="Rose M."/>
            <person name="Hauf J."/>
            <person name="Koetter P."/>
            <person name="Berneiser S."/>
            <person name="Hempel S."/>
            <person name="Feldpausch M."/>
            <person name="Lamberth S."/>
            <person name="Van den Daele H."/>
            <person name="De Keyser A."/>
            <person name="Buysshaert C."/>
            <person name="Gielen J."/>
            <person name="Villarroel R."/>
            <person name="De Clercq R."/>
            <person name="van Montagu M."/>
            <person name="Rogers J."/>
            <person name="Cronin A."/>
            <person name="Quail M.A."/>
            <person name="Bray-Allen S."/>
            <person name="Clark L."/>
            <person name="Doggett J."/>
            <person name="Hall S."/>
            <person name="Kay M."/>
            <person name="Lennard N."/>
            <person name="McLay K."/>
            <person name="Mayes R."/>
            <person name="Pettett A."/>
            <person name="Rajandream M.A."/>
            <person name="Lyne M."/>
            <person name="Benes V."/>
            <person name="Rechmann S."/>
            <person name="Borkova D."/>
            <person name="Bloecker H."/>
            <person name="Scharfe M."/>
            <person name="Grimm M."/>
            <person name="Loehnert T.-H."/>
            <person name="Dose S."/>
            <person name="de Haan M."/>
            <person name="Maarse A.C."/>
            <person name="Schaefer M."/>
            <person name="Mueller-Auer S."/>
            <person name="Gabel C."/>
            <person name="Fuchs M."/>
            <person name="Fartmann B."/>
            <person name="Granderath K."/>
            <person name="Dauner D."/>
            <person name="Herzl A."/>
            <person name="Neumann S."/>
            <person name="Argiriou A."/>
            <person name="Vitale D."/>
            <person name="Liguori R."/>
            <person name="Piravandi E."/>
            <person name="Massenet O."/>
            <person name="Quigley F."/>
            <person name="Clabauld G."/>
            <person name="Muendlein A."/>
            <person name="Felber R."/>
            <person name="Schnabl S."/>
            <person name="Hiller R."/>
            <person name="Schmidt W."/>
            <person name="Lecharny A."/>
            <person name="Aubourg S."/>
            <person name="Chefdor F."/>
            <person name="Cooke R."/>
            <person name="Berger C."/>
            <person name="Monfort A."/>
            <person name="Casacuberta E."/>
            <person name="Gibbons T."/>
            <person name="Weber N."/>
            <person name="Vandenbol M."/>
            <person name="Bargues M."/>
            <person name="Terol J."/>
            <person name="Torres A."/>
            <person name="Perez-Perez A."/>
            <person name="Purnelle B."/>
            <person name="Bent E."/>
            <person name="Johnson S."/>
            <person name="Tacon D."/>
            <person name="Jesse T."/>
            <person name="Heijnen L."/>
            <person name="Schwarz S."/>
            <person name="Scholler P."/>
            <person name="Heber S."/>
            <person name="Francs P."/>
            <person name="Bielke C."/>
            <person name="Frishman D."/>
            <person name="Haase D."/>
            <person name="Lemcke K."/>
            <person name="Mewes H.-W."/>
            <person name="Stocker S."/>
            <person name="Zaccaria P."/>
            <person name="Bevan M."/>
            <person name="Wilson R.K."/>
            <person name="de la Bastide M."/>
            <person name="Habermann K."/>
            <person name="Parnell L."/>
            <person name="Dedhia N."/>
            <person name="Gnoj L."/>
            <person name="Schutz K."/>
            <person name="Huang E."/>
            <person name="Spiegel L."/>
            <person name="Sekhon M."/>
            <person name="Murray J."/>
            <person name="Sheet P."/>
            <person name="Cordes M."/>
            <person name="Abu-Threideh J."/>
            <person name="Stoneking T."/>
            <person name="Kalicki J."/>
            <person name="Graves T."/>
            <person name="Harmon G."/>
            <person name="Edwards J."/>
            <person name="Latreille P."/>
            <person name="Courtney L."/>
            <person name="Cloud J."/>
            <person name="Abbott A."/>
            <person name="Scott K."/>
            <person name="Johnson D."/>
            <person name="Minx P."/>
            <person name="Bentley D."/>
            <person name="Fulton B."/>
            <person name="Miller N."/>
            <person name="Greco T."/>
            <person name="Kemp K."/>
            <person name="Kramer J."/>
            <person name="Fulton L."/>
            <person name="Mardis E."/>
            <person name="Dante M."/>
            <person name="Pepin K."/>
            <person name="Hillier L.W."/>
            <person name="Nelson J."/>
            <person name="Spieth J."/>
            <person name="Ryan E."/>
            <person name="Andrews S."/>
            <person name="Geisel C."/>
            <person name="Layman D."/>
            <person name="Du H."/>
            <person name="Ali J."/>
            <person name="Berghoff A."/>
            <person name="Jones K."/>
            <person name="Drone K."/>
            <person name="Cotton M."/>
            <person name="Joshu C."/>
            <person name="Antonoiu B."/>
            <person name="Zidanic M."/>
            <person name="Strong C."/>
            <person name="Sun H."/>
            <person name="Lamar B."/>
            <person name="Yordan C."/>
            <person name="Ma P."/>
            <person name="Zhong J."/>
            <person name="Preston R."/>
            <person name="Vil D."/>
            <person name="Shekher M."/>
            <person name="Matero A."/>
            <person name="Shah R."/>
            <person name="Swaby I.K."/>
            <person name="O'Shaughnessy A."/>
            <person name="Rodriguez M."/>
            <person name="Hoffman J."/>
            <person name="Till S."/>
            <person name="Granat S."/>
            <person name="Shohdy N."/>
            <person name="Hasegawa A."/>
            <person name="Hameed A."/>
            <person name="Lodhi M."/>
            <person name="Johnson A."/>
            <person name="Chen E."/>
            <person name="Marra M.A."/>
            <person name="Martienssen R."/>
            <person name="McCombie W.R."/>
        </authorList>
    </citation>
    <scope>NUCLEOTIDE SEQUENCE [LARGE SCALE GENOMIC DNA]</scope>
    <source>
        <strain>cv. Columbia</strain>
    </source>
</reference>
<reference key="2">
    <citation type="journal article" date="2017" name="Plant J.">
        <title>Araport11: a complete reannotation of the Arabidopsis thaliana reference genome.</title>
        <authorList>
            <person name="Cheng C.Y."/>
            <person name="Krishnakumar V."/>
            <person name="Chan A.P."/>
            <person name="Thibaud-Nissen F."/>
            <person name="Schobel S."/>
            <person name="Town C.D."/>
        </authorList>
    </citation>
    <scope>GENOME REANNOTATION</scope>
    <source>
        <strain>cv. Columbia</strain>
    </source>
</reference>
<reference key="3">
    <citation type="journal article" date="2003" name="Science">
        <title>Empirical analysis of transcriptional activity in the Arabidopsis genome.</title>
        <authorList>
            <person name="Yamada K."/>
            <person name="Lim J."/>
            <person name="Dale J.M."/>
            <person name="Chen H."/>
            <person name="Shinn P."/>
            <person name="Palm C.J."/>
            <person name="Southwick A.M."/>
            <person name="Wu H.C."/>
            <person name="Kim C.J."/>
            <person name="Nguyen M."/>
            <person name="Pham P.K."/>
            <person name="Cheuk R.F."/>
            <person name="Karlin-Newmann G."/>
            <person name="Liu S.X."/>
            <person name="Lam B."/>
            <person name="Sakano H."/>
            <person name="Wu T."/>
            <person name="Yu G."/>
            <person name="Miranda M."/>
            <person name="Quach H.L."/>
            <person name="Tripp M."/>
            <person name="Chang C.H."/>
            <person name="Lee J.M."/>
            <person name="Toriumi M.J."/>
            <person name="Chan M.M."/>
            <person name="Tang C.C."/>
            <person name="Onodera C.S."/>
            <person name="Deng J.M."/>
            <person name="Akiyama K."/>
            <person name="Ansari Y."/>
            <person name="Arakawa T."/>
            <person name="Banh J."/>
            <person name="Banno F."/>
            <person name="Bowser L."/>
            <person name="Brooks S.Y."/>
            <person name="Carninci P."/>
            <person name="Chao Q."/>
            <person name="Choy N."/>
            <person name="Enju A."/>
            <person name="Goldsmith A.D."/>
            <person name="Gurjal M."/>
            <person name="Hansen N.F."/>
            <person name="Hayashizaki Y."/>
            <person name="Johnson-Hopson C."/>
            <person name="Hsuan V.W."/>
            <person name="Iida K."/>
            <person name="Karnes M."/>
            <person name="Khan S."/>
            <person name="Koesema E."/>
            <person name="Ishida J."/>
            <person name="Jiang P.X."/>
            <person name="Jones T."/>
            <person name="Kawai J."/>
            <person name="Kamiya A."/>
            <person name="Meyers C."/>
            <person name="Nakajima M."/>
            <person name="Narusaka M."/>
            <person name="Seki M."/>
            <person name="Sakurai T."/>
            <person name="Satou M."/>
            <person name="Tamse R."/>
            <person name="Vaysberg M."/>
            <person name="Wallender E.K."/>
            <person name="Wong C."/>
            <person name="Yamamura Y."/>
            <person name="Yuan S."/>
            <person name="Shinozaki K."/>
            <person name="Davis R.W."/>
            <person name="Theologis A."/>
            <person name="Ecker J.R."/>
        </authorList>
    </citation>
    <scope>NUCLEOTIDE SEQUENCE [LARGE SCALE MRNA]</scope>
    <source>
        <strain>cv. Columbia</strain>
    </source>
</reference>
<reference key="4">
    <citation type="submission" date="2005-03" db="EMBL/GenBank/DDBJ databases">
        <title>Large-scale analysis of RIKEN Arabidopsis full-length (RAFL) cDNAs.</title>
        <authorList>
            <person name="Totoki Y."/>
            <person name="Seki M."/>
            <person name="Ishida J."/>
            <person name="Nakajima M."/>
            <person name="Enju A."/>
            <person name="Kamiya A."/>
            <person name="Narusaka M."/>
            <person name="Shin-i T."/>
            <person name="Nakagawa M."/>
            <person name="Sakamoto N."/>
            <person name="Oishi K."/>
            <person name="Kohara Y."/>
            <person name="Kobayashi M."/>
            <person name="Toyoda A."/>
            <person name="Sakaki Y."/>
            <person name="Sakurai T."/>
            <person name="Iida K."/>
            <person name="Akiyama K."/>
            <person name="Satou M."/>
            <person name="Toyoda T."/>
            <person name="Konagaya A."/>
            <person name="Carninci P."/>
            <person name="Kawai J."/>
            <person name="Hayashizaki Y."/>
            <person name="Shinozaki K."/>
        </authorList>
    </citation>
    <scope>NUCLEOTIDE SEQUENCE [LARGE SCALE MRNA]</scope>
    <source>
        <strain>cv. Columbia</strain>
    </source>
</reference>
<reference key="5">
    <citation type="journal article" date="2008" name="Plant Physiol.">
        <title>Inactive methyl indole-3-acetic acid ester can be hydrolyzed and activated by several esterases belonging to the AtMES esterase family of Arabidopsis.</title>
        <authorList>
            <person name="Yang Y."/>
            <person name="Xu R."/>
            <person name="Ma C.J."/>
            <person name="Vlot A.C."/>
            <person name="Klessig D.F."/>
            <person name="Pichersky E."/>
        </authorList>
    </citation>
    <scope>GENE FAMILY</scope>
</reference>
<feature type="transit peptide" description="Chloroplast" evidence="3">
    <location>
        <begin position="1"/>
        <end position="77"/>
    </location>
</feature>
<feature type="chain" id="PRO_0000418186" description="Putative methylesterase 12, chloroplastic">
    <location>
        <begin position="78"/>
        <end position="349"/>
    </location>
</feature>
<feature type="region of interest" description="Disordered" evidence="4">
    <location>
        <begin position="61"/>
        <end position="80"/>
    </location>
</feature>
<feature type="active site" description="Acyl-ester intermediate" evidence="1">
    <location>
        <position position="173"/>
    </location>
</feature>
<feature type="active site" description="Charge relay system" evidence="1">
    <location>
        <position position="300"/>
    </location>
</feature>
<feature type="active site" description="Charge relay system" evidence="1">
    <location>
        <position position="328"/>
    </location>
</feature>
<accession>Q940H7</accession>
<accession>Q9T0E9</accession>
<accession>Q9T0F0</accession>
<keyword id="KW-0150">Chloroplast</keyword>
<keyword id="KW-0378">Hydrolase</keyword>
<keyword id="KW-0934">Plastid</keyword>
<keyword id="KW-1185">Reference proteome</keyword>
<keyword id="KW-0809">Transit peptide</keyword>
<proteinExistence type="evidence at transcript level"/>
<evidence type="ECO:0000250" key="1">
    <source>
        <dbReference type="UniProtKB" id="Q6RYA0"/>
    </source>
</evidence>
<evidence type="ECO:0000250" key="2">
    <source>
        <dbReference type="UniProtKB" id="Q9SG92"/>
    </source>
</evidence>
<evidence type="ECO:0000255" key="3"/>
<evidence type="ECO:0000256" key="4">
    <source>
        <dbReference type="SAM" id="MobiDB-lite"/>
    </source>
</evidence>
<evidence type="ECO:0000303" key="5">
    <source>
    </source>
</evidence>
<evidence type="ECO:0000305" key="6"/>
<organism>
    <name type="scientific">Arabidopsis thaliana</name>
    <name type="common">Mouse-ear cress</name>
    <dbReference type="NCBI Taxonomy" id="3702"/>
    <lineage>
        <taxon>Eukaryota</taxon>
        <taxon>Viridiplantae</taxon>
        <taxon>Streptophyta</taxon>
        <taxon>Embryophyta</taxon>
        <taxon>Tracheophyta</taxon>
        <taxon>Spermatophyta</taxon>
        <taxon>Magnoliopsida</taxon>
        <taxon>eudicotyledons</taxon>
        <taxon>Gunneridae</taxon>
        <taxon>Pentapetalae</taxon>
        <taxon>rosids</taxon>
        <taxon>malvids</taxon>
        <taxon>Brassicales</taxon>
        <taxon>Brassicaceae</taxon>
        <taxon>Camelineae</taxon>
        <taxon>Arabidopsis</taxon>
    </lineage>
</organism>
<protein>
    <recommendedName>
        <fullName evidence="5">Putative methylesterase 12, chloroplastic</fullName>
        <shortName evidence="5">AtMES12</shortName>
        <ecNumber evidence="2">3.1.1.-</ecNumber>
    </recommendedName>
</protein>
<comment type="function">
    <text>Putative methylesterase.</text>
</comment>
<comment type="subcellular location">
    <subcellularLocation>
        <location evidence="6">Plastid</location>
        <location evidence="6">Chloroplast</location>
    </subcellularLocation>
</comment>
<comment type="similarity">
    <text evidence="6">Belongs to the AB hydrolase superfamily. Methylesterase family.</text>
</comment>
<comment type="sequence caution" evidence="6">
    <conflict type="erroneous gene model prediction">
        <sequence resource="EMBL-CDS" id="CAB39614"/>
    </conflict>
    <text>Was originally thought to correspond to two different genes At4g09900 and At4g09910.</text>
</comment>
<comment type="sequence caution" evidence="6">
    <conflict type="erroneous gene model prediction">
        <sequence resource="EMBL-CDS" id="CAB39615"/>
    </conflict>
    <text>Was originally thought to correspond to two different genes At4g09900 and At4g09910.</text>
</comment>
<comment type="sequence caution" evidence="6">
    <conflict type="erroneous gene model prediction">
        <sequence resource="EMBL-CDS" id="CAB78113"/>
    </conflict>
    <text>Was originally thought to correspond to two different genes At4g09900 and At4g09910.</text>
</comment>
<comment type="sequence caution" evidence="6">
    <conflict type="erroneous gene model prediction">
        <sequence resource="EMBL-CDS" id="CAB78114"/>
    </conflict>
    <text>Was originally thought to correspond to two different genes At4g09900 and At4g09910.</text>
</comment>
<gene>
    <name evidence="5" type="primary">MES12</name>
    <name type="ordered locus">At4g09900/At4g09910</name>
    <name type="ORF">T5L19.30/T5L19.40</name>
</gene>
<sequence>MGNRVICMKKKDVVIRSGGDGSRSKRVNRSQRKLLADEENLHRRALSMAIHQAQVSQRFDGSMSRRIGSTSSRRGTLSDSFSNNKQVPEFLESLKVKKFVLVHGEGFGAWCWYKTIASLEESGLSPVTVDLAGSGFNMTDANSVSTLEEYSKPLIELIQNLPAEEKVILVGHSTGGACVSYALERFPEKISKAIFICATMVTDGQRPFDVFADELGSAERFMKESQFLIYGNGKDNPATGFMFEKQHMKGLYFNQSPNKDIALSMISMRPVPLGPMMEKLSLSAERYGKGRRFYVQTLDDLALSPDVQEKLVRENSPEAVFKIKGSDHCPFFSKPQSLHKILLEIAQIP</sequence>
<dbReference type="EC" id="3.1.1.-" evidence="2"/>
<dbReference type="EMBL" id="AL049481">
    <property type="protein sequence ID" value="CAB39614.1"/>
    <property type="status" value="ALT_SEQ"/>
    <property type="molecule type" value="Genomic_DNA"/>
</dbReference>
<dbReference type="EMBL" id="AL049481">
    <property type="protein sequence ID" value="CAB39615.1"/>
    <property type="status" value="ALT_SEQ"/>
    <property type="molecule type" value="Genomic_DNA"/>
</dbReference>
<dbReference type="EMBL" id="AL161516">
    <property type="protein sequence ID" value="CAB78113.1"/>
    <property type="status" value="ALT_SEQ"/>
    <property type="molecule type" value="Genomic_DNA"/>
</dbReference>
<dbReference type="EMBL" id="AL161516">
    <property type="protein sequence ID" value="CAB78114.1"/>
    <property type="status" value="ALT_SEQ"/>
    <property type="molecule type" value="Genomic_DNA"/>
</dbReference>
<dbReference type="EMBL" id="CP002687">
    <property type="protein sequence ID" value="AEE82811.1"/>
    <property type="molecule type" value="Genomic_DNA"/>
</dbReference>
<dbReference type="EMBL" id="AY054619">
    <property type="protein sequence ID" value="AAK96810.1"/>
    <property type="molecule type" value="mRNA"/>
</dbReference>
<dbReference type="EMBL" id="AY081515">
    <property type="protein sequence ID" value="AAM10077.1"/>
    <property type="molecule type" value="mRNA"/>
</dbReference>
<dbReference type="EMBL" id="AK221404">
    <property type="protein sequence ID" value="BAD94362.1"/>
    <property type="molecule type" value="mRNA"/>
</dbReference>
<dbReference type="PIR" id="T03994">
    <property type="entry name" value="T03994"/>
</dbReference>
<dbReference type="PIR" id="T03995">
    <property type="entry name" value="T03995"/>
</dbReference>
<dbReference type="RefSeq" id="NP_192728.2">
    <property type="nucleotide sequence ID" value="NM_117058.4"/>
</dbReference>
<dbReference type="SMR" id="Q940H7"/>
<dbReference type="FunCoup" id="Q940H7">
    <property type="interactions" value="165"/>
</dbReference>
<dbReference type="ESTHER" id="arath-AT4g09900">
    <property type="family name" value="Hydroxynitrile_lyase"/>
</dbReference>
<dbReference type="MEROPS" id="S33.A67"/>
<dbReference type="iPTMnet" id="Q940H7"/>
<dbReference type="PaxDb" id="3702-AT4G09900.1"/>
<dbReference type="ProteomicsDB" id="250642"/>
<dbReference type="EnsemblPlants" id="AT4G09900.1">
    <property type="protein sequence ID" value="AT4G09900.1"/>
    <property type="gene ID" value="AT4G09900"/>
</dbReference>
<dbReference type="GeneID" id="826580"/>
<dbReference type="Gramene" id="AT4G09900.1">
    <property type="protein sequence ID" value="AT4G09900.1"/>
    <property type="gene ID" value="AT4G09900"/>
</dbReference>
<dbReference type="KEGG" id="ath:AT4G09900"/>
<dbReference type="Araport" id="AT4G09900"/>
<dbReference type="TAIR" id="AT4G09900">
    <property type="gene designation" value="MES12"/>
</dbReference>
<dbReference type="eggNOG" id="ENOG502QRMV">
    <property type="taxonomic scope" value="Eukaryota"/>
</dbReference>
<dbReference type="HOGENOM" id="CLU_046066_8_0_1"/>
<dbReference type="InParanoid" id="Q940H7"/>
<dbReference type="OMA" id="FNMTDAN"/>
<dbReference type="PhylomeDB" id="Q940H7"/>
<dbReference type="BioCyc" id="ARA:AT4G09900-MONOMER"/>
<dbReference type="PRO" id="PR:Q940H7"/>
<dbReference type="Proteomes" id="UP000006548">
    <property type="component" value="Chromosome 4"/>
</dbReference>
<dbReference type="ExpressionAtlas" id="Q940H7">
    <property type="expression patterns" value="baseline and differential"/>
</dbReference>
<dbReference type="GO" id="GO:0009507">
    <property type="term" value="C:chloroplast"/>
    <property type="evidence" value="ECO:0007669"/>
    <property type="project" value="UniProtKB-SubCell"/>
</dbReference>
<dbReference type="GO" id="GO:0080030">
    <property type="term" value="F:methyl indole-3-acetate esterase activity"/>
    <property type="evidence" value="ECO:0000318"/>
    <property type="project" value="GO_Central"/>
</dbReference>
<dbReference type="GO" id="GO:0080032">
    <property type="term" value="F:methyl jasmonate esterase activity"/>
    <property type="evidence" value="ECO:0000318"/>
    <property type="project" value="GO_Central"/>
</dbReference>
<dbReference type="GO" id="GO:0080031">
    <property type="term" value="F:methyl salicylate esterase activity"/>
    <property type="evidence" value="ECO:0000318"/>
    <property type="project" value="GO_Central"/>
</dbReference>
<dbReference type="GO" id="GO:0009694">
    <property type="term" value="P:jasmonic acid metabolic process"/>
    <property type="evidence" value="ECO:0000318"/>
    <property type="project" value="GO_Central"/>
</dbReference>
<dbReference type="GO" id="GO:0009696">
    <property type="term" value="P:salicylic acid metabolic process"/>
    <property type="evidence" value="ECO:0000318"/>
    <property type="project" value="GO_Central"/>
</dbReference>
<dbReference type="FunFam" id="3.40.50.1820:FF:000025">
    <property type="entry name" value="putative methylesterase 11, chloroplastic"/>
    <property type="match status" value="1"/>
</dbReference>
<dbReference type="Gene3D" id="3.40.50.1820">
    <property type="entry name" value="alpha/beta hydrolase"/>
    <property type="match status" value="1"/>
</dbReference>
<dbReference type="InterPro" id="IPR000073">
    <property type="entry name" value="AB_hydrolase_1"/>
</dbReference>
<dbReference type="InterPro" id="IPR029058">
    <property type="entry name" value="AB_hydrolase_fold"/>
</dbReference>
<dbReference type="InterPro" id="IPR045889">
    <property type="entry name" value="MES/HNL"/>
</dbReference>
<dbReference type="PANTHER" id="PTHR10992:SF1011">
    <property type="entry name" value="METHYLESTERASE 12, CHLOROPLASTIC-RELATED"/>
    <property type="match status" value="1"/>
</dbReference>
<dbReference type="PANTHER" id="PTHR10992">
    <property type="entry name" value="METHYLESTERASE FAMILY MEMBER"/>
    <property type="match status" value="1"/>
</dbReference>
<dbReference type="Pfam" id="PF12697">
    <property type="entry name" value="Abhydrolase_6"/>
    <property type="match status" value="1"/>
</dbReference>
<dbReference type="SUPFAM" id="SSF53474">
    <property type="entry name" value="alpha/beta-Hydrolases"/>
    <property type="match status" value="1"/>
</dbReference>
<dbReference type="PROSITE" id="PS00120">
    <property type="entry name" value="LIPASE_SER"/>
    <property type="match status" value="1"/>
</dbReference>